<gene>
    <name type="primary">tim22</name>
    <name type="ORF">SPBC25H2.04c</name>
</gene>
<protein>
    <recommendedName>
        <fullName>Mitochondrial import inner membrane translocase subunit tim22</fullName>
    </recommendedName>
</protein>
<proteinExistence type="inferred from homology"/>
<dbReference type="EMBL" id="CU329671">
    <property type="protein sequence ID" value="CAB08780.1"/>
    <property type="molecule type" value="Genomic_DNA"/>
</dbReference>
<dbReference type="PIR" id="T39999">
    <property type="entry name" value="T39999"/>
</dbReference>
<dbReference type="RefSeq" id="NP_596362.1">
    <property type="nucleotide sequence ID" value="NM_001022283.2"/>
</dbReference>
<dbReference type="SMR" id="P87146"/>
<dbReference type="FunCoup" id="P87146">
    <property type="interactions" value="388"/>
</dbReference>
<dbReference type="STRING" id="284812.P87146"/>
<dbReference type="PaxDb" id="4896-SPBC25H2.04c.1"/>
<dbReference type="EnsemblFungi" id="SPBC25H2.04c.1">
    <property type="protein sequence ID" value="SPBC25H2.04c.1:pep"/>
    <property type="gene ID" value="SPBC25H2.04c"/>
</dbReference>
<dbReference type="GeneID" id="2540483"/>
<dbReference type="KEGG" id="spo:2540483"/>
<dbReference type="PomBase" id="SPBC25H2.04c">
    <property type="gene designation" value="tim22"/>
</dbReference>
<dbReference type="VEuPathDB" id="FungiDB:SPBC25H2.04c"/>
<dbReference type="eggNOG" id="KOG3225">
    <property type="taxonomic scope" value="Eukaryota"/>
</dbReference>
<dbReference type="HOGENOM" id="CLU_091077_1_0_1"/>
<dbReference type="InParanoid" id="P87146"/>
<dbReference type="OMA" id="QPTNIDY"/>
<dbReference type="PhylomeDB" id="P87146"/>
<dbReference type="Reactome" id="R-SPO-1268020">
    <property type="pathway name" value="Mitochondrial protein import"/>
</dbReference>
<dbReference type="PRO" id="PR:P87146"/>
<dbReference type="Proteomes" id="UP000002485">
    <property type="component" value="Chromosome II"/>
</dbReference>
<dbReference type="GO" id="GO:0005739">
    <property type="term" value="C:mitochondrion"/>
    <property type="evidence" value="ECO:0007005"/>
    <property type="project" value="PomBase"/>
</dbReference>
<dbReference type="GO" id="GO:0042721">
    <property type="term" value="C:TIM22 mitochondrial import inner membrane insertion complex"/>
    <property type="evidence" value="ECO:0000318"/>
    <property type="project" value="GO_Central"/>
</dbReference>
<dbReference type="GO" id="GO:0030943">
    <property type="term" value="F:mitochondrion targeting sequence binding"/>
    <property type="evidence" value="ECO:0000318"/>
    <property type="project" value="GO_Central"/>
</dbReference>
<dbReference type="GO" id="GO:0008320">
    <property type="term" value="F:protein transmembrane transporter activity"/>
    <property type="evidence" value="ECO:0000318"/>
    <property type="project" value="GO_Central"/>
</dbReference>
<dbReference type="GO" id="GO:0045039">
    <property type="term" value="P:protein insertion into mitochondrial inner membrane"/>
    <property type="evidence" value="ECO:0000318"/>
    <property type="project" value="GO_Central"/>
</dbReference>
<dbReference type="InterPro" id="IPR039175">
    <property type="entry name" value="TIM22"/>
</dbReference>
<dbReference type="PANTHER" id="PTHR14110">
    <property type="entry name" value="MITOCHONDRIAL IMPORT INNER MEMBRANE TRANSLOCASE SUBUNIT TIM22"/>
    <property type="match status" value="1"/>
</dbReference>
<dbReference type="PANTHER" id="PTHR14110:SF0">
    <property type="entry name" value="MITOCHONDRIAL IMPORT INNER MEMBRANE TRANSLOCASE SUBUNIT TIM22"/>
    <property type="match status" value="1"/>
</dbReference>
<dbReference type="Pfam" id="PF02466">
    <property type="entry name" value="Tim17"/>
    <property type="match status" value="1"/>
</dbReference>
<keyword id="KW-1015">Disulfide bond</keyword>
<keyword id="KW-0472">Membrane</keyword>
<keyword id="KW-0496">Mitochondrion</keyword>
<keyword id="KW-0999">Mitochondrion inner membrane</keyword>
<keyword id="KW-0653">Protein transport</keyword>
<keyword id="KW-1185">Reference proteome</keyword>
<keyword id="KW-0811">Translocation</keyword>
<keyword id="KW-0812">Transmembrane</keyword>
<keyword id="KW-1133">Transmembrane helix</keyword>
<keyword id="KW-0813">Transport</keyword>
<accession>P87146</accession>
<feature type="chain" id="PRO_0000210300" description="Mitochondrial import inner membrane translocase subunit tim22">
    <location>
        <begin position="1"/>
        <end position="175"/>
    </location>
</feature>
<feature type="transmembrane region" description="Helical" evidence="3">
    <location>
        <begin position="51"/>
        <end position="71"/>
    </location>
</feature>
<feature type="transmembrane region" description="Helical" evidence="3">
    <location>
        <begin position="126"/>
        <end position="146"/>
    </location>
</feature>
<feature type="transmembrane region" description="Helical" evidence="3">
    <location>
        <begin position="153"/>
        <end position="173"/>
    </location>
</feature>
<feature type="region of interest" description="Disordered" evidence="4">
    <location>
        <begin position="1"/>
        <end position="23"/>
    </location>
</feature>
<feature type="compositionally biased region" description="Low complexity" evidence="4">
    <location>
        <begin position="1"/>
        <end position="17"/>
    </location>
</feature>
<feature type="disulfide bond" evidence="1">
    <location>
        <begin position="46"/>
        <end position="119"/>
    </location>
</feature>
<sequence length="175" mass="18641">MSLSGLLPPNLGGNSPNADGNLTPEEKAALQQAKIIGYMNRISESCVFKSSMAGVLGFGLGGIFGMFISSLDLQHIDPKIYEKPFREQIRIQARDMGSRSFSTAKNFGLLGLIYSGSECCIEAFRAKTDIYNAIAAGVFTGGALAVRSGPKAIVLGGAGFGLFSYGIEKYMHWGE</sequence>
<comment type="function">
    <text evidence="2">Essential core component of the TIM22 complex, a complex that mediates the import and insertion of multi-pass transmembrane proteins into the mitochondrial inner membrane. In the TIM22 complex, it constitutes the voltage-activated and signal-gated channel. Forms a twin-pore translocase that uses the membrane potential as external driving force in 2 voltage-dependent steps (By similarity).</text>
</comment>
<comment type="subunit">
    <text evidence="2">Component of the TIM22 complex, whose core is composed of TIM22 and TIM54, associated with the 70 kDa heterohexamer composed of TIM9 and TIM10 (or TIM8 and TIM13).</text>
</comment>
<comment type="subcellular location">
    <subcellularLocation>
        <location evidence="2">Mitochondrion inner membrane</location>
        <topology evidence="3">Multi-pass membrane protein</topology>
    </subcellularLocation>
</comment>
<comment type="similarity">
    <text evidence="5">Belongs to the Tim17/Tim22/Tim23 family.</text>
</comment>
<reference key="1">
    <citation type="journal article" date="2002" name="Nature">
        <title>The genome sequence of Schizosaccharomyces pombe.</title>
        <authorList>
            <person name="Wood V."/>
            <person name="Gwilliam R."/>
            <person name="Rajandream M.A."/>
            <person name="Lyne M.H."/>
            <person name="Lyne R."/>
            <person name="Stewart A."/>
            <person name="Sgouros J.G."/>
            <person name="Peat N."/>
            <person name="Hayles J."/>
            <person name="Baker S.G."/>
            <person name="Basham D."/>
            <person name="Bowman S."/>
            <person name="Brooks K."/>
            <person name="Brown D."/>
            <person name="Brown S."/>
            <person name="Chillingworth T."/>
            <person name="Churcher C.M."/>
            <person name="Collins M."/>
            <person name="Connor R."/>
            <person name="Cronin A."/>
            <person name="Davis P."/>
            <person name="Feltwell T."/>
            <person name="Fraser A."/>
            <person name="Gentles S."/>
            <person name="Goble A."/>
            <person name="Hamlin N."/>
            <person name="Harris D.E."/>
            <person name="Hidalgo J."/>
            <person name="Hodgson G."/>
            <person name="Holroyd S."/>
            <person name="Hornsby T."/>
            <person name="Howarth S."/>
            <person name="Huckle E.J."/>
            <person name="Hunt S."/>
            <person name="Jagels K."/>
            <person name="James K.D."/>
            <person name="Jones L."/>
            <person name="Jones M."/>
            <person name="Leather S."/>
            <person name="McDonald S."/>
            <person name="McLean J."/>
            <person name="Mooney P."/>
            <person name="Moule S."/>
            <person name="Mungall K.L."/>
            <person name="Murphy L.D."/>
            <person name="Niblett D."/>
            <person name="Odell C."/>
            <person name="Oliver K."/>
            <person name="O'Neil S."/>
            <person name="Pearson D."/>
            <person name="Quail M.A."/>
            <person name="Rabbinowitsch E."/>
            <person name="Rutherford K.M."/>
            <person name="Rutter S."/>
            <person name="Saunders D."/>
            <person name="Seeger K."/>
            <person name="Sharp S."/>
            <person name="Skelton J."/>
            <person name="Simmonds M.N."/>
            <person name="Squares R."/>
            <person name="Squares S."/>
            <person name="Stevens K."/>
            <person name="Taylor K."/>
            <person name="Taylor R.G."/>
            <person name="Tivey A."/>
            <person name="Walsh S.V."/>
            <person name="Warren T."/>
            <person name="Whitehead S."/>
            <person name="Woodward J.R."/>
            <person name="Volckaert G."/>
            <person name="Aert R."/>
            <person name="Robben J."/>
            <person name="Grymonprez B."/>
            <person name="Weltjens I."/>
            <person name="Vanstreels E."/>
            <person name="Rieger M."/>
            <person name="Schaefer M."/>
            <person name="Mueller-Auer S."/>
            <person name="Gabel C."/>
            <person name="Fuchs M."/>
            <person name="Duesterhoeft A."/>
            <person name="Fritzc C."/>
            <person name="Holzer E."/>
            <person name="Moestl D."/>
            <person name="Hilbert H."/>
            <person name="Borzym K."/>
            <person name="Langer I."/>
            <person name="Beck A."/>
            <person name="Lehrach H."/>
            <person name="Reinhardt R."/>
            <person name="Pohl T.M."/>
            <person name="Eger P."/>
            <person name="Zimmermann W."/>
            <person name="Wedler H."/>
            <person name="Wambutt R."/>
            <person name="Purnelle B."/>
            <person name="Goffeau A."/>
            <person name="Cadieu E."/>
            <person name="Dreano S."/>
            <person name="Gloux S."/>
            <person name="Lelaure V."/>
            <person name="Mottier S."/>
            <person name="Galibert F."/>
            <person name="Aves S.J."/>
            <person name="Xiang Z."/>
            <person name="Hunt C."/>
            <person name="Moore K."/>
            <person name="Hurst S.M."/>
            <person name="Lucas M."/>
            <person name="Rochet M."/>
            <person name="Gaillardin C."/>
            <person name="Tallada V.A."/>
            <person name="Garzon A."/>
            <person name="Thode G."/>
            <person name="Daga R.R."/>
            <person name="Cruzado L."/>
            <person name="Jimenez J."/>
            <person name="Sanchez M."/>
            <person name="del Rey F."/>
            <person name="Benito J."/>
            <person name="Dominguez A."/>
            <person name="Revuelta J.L."/>
            <person name="Moreno S."/>
            <person name="Armstrong J."/>
            <person name="Forsburg S.L."/>
            <person name="Cerutti L."/>
            <person name="Lowe T."/>
            <person name="McCombie W.R."/>
            <person name="Paulsen I."/>
            <person name="Potashkin J."/>
            <person name="Shpakovski G.V."/>
            <person name="Ussery D."/>
            <person name="Barrell B.G."/>
            <person name="Nurse P."/>
        </authorList>
    </citation>
    <scope>NUCLEOTIDE SEQUENCE [LARGE SCALE GENOMIC DNA]</scope>
    <source>
        <strain>972 / ATCC 24843</strain>
    </source>
</reference>
<name>TIM22_SCHPO</name>
<organism>
    <name type="scientific">Schizosaccharomyces pombe (strain 972 / ATCC 24843)</name>
    <name type="common">Fission yeast</name>
    <dbReference type="NCBI Taxonomy" id="284812"/>
    <lineage>
        <taxon>Eukaryota</taxon>
        <taxon>Fungi</taxon>
        <taxon>Dikarya</taxon>
        <taxon>Ascomycota</taxon>
        <taxon>Taphrinomycotina</taxon>
        <taxon>Schizosaccharomycetes</taxon>
        <taxon>Schizosaccharomycetales</taxon>
        <taxon>Schizosaccharomycetaceae</taxon>
        <taxon>Schizosaccharomyces</taxon>
    </lineage>
</organism>
<evidence type="ECO:0000250" key="1">
    <source>
        <dbReference type="UniProtKB" id="A0A1D8PI78"/>
    </source>
</evidence>
<evidence type="ECO:0000250" key="2">
    <source>
        <dbReference type="UniProtKB" id="Q12328"/>
    </source>
</evidence>
<evidence type="ECO:0000255" key="3"/>
<evidence type="ECO:0000256" key="4">
    <source>
        <dbReference type="SAM" id="MobiDB-lite"/>
    </source>
</evidence>
<evidence type="ECO:0000305" key="5"/>